<accession>P0A549</accession>
<accession>A0A1R3XW59</accession>
<accession>O08380</accession>
<accession>P07881</accession>
<accession>X2BEP4</accession>
<dbReference type="EMBL" id="LT708304">
    <property type="protein sequence ID" value="SIT98916.1"/>
    <property type="molecule type" value="Genomic_DNA"/>
</dbReference>
<dbReference type="RefSeq" id="NP_854023.1">
    <property type="nucleotide sequence ID" value="NC_002945.3"/>
</dbReference>
<dbReference type="SMR" id="P0A549"/>
<dbReference type="PATRIC" id="fig|233413.5.peg.394"/>
<dbReference type="Proteomes" id="UP000001419">
    <property type="component" value="Chromosome"/>
</dbReference>
<dbReference type="GO" id="GO:0005737">
    <property type="term" value="C:cytoplasm"/>
    <property type="evidence" value="ECO:0007669"/>
    <property type="project" value="UniProtKB-SubCell"/>
</dbReference>
<dbReference type="GO" id="GO:0005524">
    <property type="term" value="F:ATP binding"/>
    <property type="evidence" value="ECO:0007669"/>
    <property type="project" value="InterPro"/>
</dbReference>
<dbReference type="GO" id="GO:0031072">
    <property type="term" value="F:heat shock protein binding"/>
    <property type="evidence" value="ECO:0007669"/>
    <property type="project" value="InterPro"/>
</dbReference>
<dbReference type="GO" id="GO:0051082">
    <property type="term" value="F:unfolded protein binding"/>
    <property type="evidence" value="ECO:0007669"/>
    <property type="project" value="UniProtKB-UniRule"/>
</dbReference>
<dbReference type="GO" id="GO:0008270">
    <property type="term" value="F:zinc ion binding"/>
    <property type="evidence" value="ECO:0007669"/>
    <property type="project" value="UniProtKB-UniRule"/>
</dbReference>
<dbReference type="GO" id="GO:0051085">
    <property type="term" value="P:chaperone cofactor-dependent protein refolding"/>
    <property type="evidence" value="ECO:0007669"/>
    <property type="project" value="TreeGrafter"/>
</dbReference>
<dbReference type="GO" id="GO:0006260">
    <property type="term" value="P:DNA replication"/>
    <property type="evidence" value="ECO:0007669"/>
    <property type="project" value="UniProtKB-KW"/>
</dbReference>
<dbReference type="GO" id="GO:0042026">
    <property type="term" value="P:protein refolding"/>
    <property type="evidence" value="ECO:0007669"/>
    <property type="project" value="TreeGrafter"/>
</dbReference>
<dbReference type="GO" id="GO:0009408">
    <property type="term" value="P:response to heat"/>
    <property type="evidence" value="ECO:0007669"/>
    <property type="project" value="InterPro"/>
</dbReference>
<dbReference type="CDD" id="cd06257">
    <property type="entry name" value="DnaJ"/>
    <property type="match status" value="1"/>
</dbReference>
<dbReference type="CDD" id="cd10747">
    <property type="entry name" value="DnaJ_C"/>
    <property type="match status" value="1"/>
</dbReference>
<dbReference type="CDD" id="cd10719">
    <property type="entry name" value="DnaJ_zf"/>
    <property type="match status" value="1"/>
</dbReference>
<dbReference type="FunFam" id="1.10.287.110:FF:000127">
    <property type="entry name" value="Chaperone protein DnaJ"/>
    <property type="match status" value="1"/>
</dbReference>
<dbReference type="FunFam" id="2.60.260.20:FF:000021">
    <property type="entry name" value="Chaperone protein DnaJ"/>
    <property type="match status" value="1"/>
</dbReference>
<dbReference type="FunFam" id="2.10.230.10:FF:000002">
    <property type="entry name" value="Molecular chaperone DnaJ"/>
    <property type="match status" value="1"/>
</dbReference>
<dbReference type="Gene3D" id="1.10.287.110">
    <property type="entry name" value="DnaJ domain"/>
    <property type="match status" value="1"/>
</dbReference>
<dbReference type="Gene3D" id="2.10.230.10">
    <property type="entry name" value="Heat shock protein DnaJ, cysteine-rich domain"/>
    <property type="match status" value="1"/>
</dbReference>
<dbReference type="Gene3D" id="2.60.260.20">
    <property type="entry name" value="Urease metallochaperone UreE, N-terminal domain"/>
    <property type="match status" value="2"/>
</dbReference>
<dbReference type="HAMAP" id="MF_01152">
    <property type="entry name" value="DnaJ"/>
    <property type="match status" value="1"/>
</dbReference>
<dbReference type="InterPro" id="IPR012724">
    <property type="entry name" value="DnaJ"/>
</dbReference>
<dbReference type="InterPro" id="IPR002939">
    <property type="entry name" value="DnaJ_C"/>
</dbReference>
<dbReference type="InterPro" id="IPR001623">
    <property type="entry name" value="DnaJ_domain"/>
</dbReference>
<dbReference type="InterPro" id="IPR018253">
    <property type="entry name" value="DnaJ_domain_CS"/>
</dbReference>
<dbReference type="InterPro" id="IPR008971">
    <property type="entry name" value="HSP40/DnaJ_pept-bd"/>
</dbReference>
<dbReference type="InterPro" id="IPR001305">
    <property type="entry name" value="HSP_DnaJ_Cys-rich_dom"/>
</dbReference>
<dbReference type="InterPro" id="IPR036410">
    <property type="entry name" value="HSP_DnaJ_Cys-rich_dom_sf"/>
</dbReference>
<dbReference type="InterPro" id="IPR036869">
    <property type="entry name" value="J_dom_sf"/>
</dbReference>
<dbReference type="NCBIfam" id="TIGR02349">
    <property type="entry name" value="DnaJ_bact"/>
    <property type="match status" value="1"/>
</dbReference>
<dbReference type="NCBIfam" id="NF008035">
    <property type="entry name" value="PRK10767.1"/>
    <property type="match status" value="1"/>
</dbReference>
<dbReference type="NCBIfam" id="NF010872">
    <property type="entry name" value="PRK14279.1"/>
    <property type="match status" value="1"/>
</dbReference>
<dbReference type="PANTHER" id="PTHR43096:SF54">
    <property type="entry name" value="CHAPERONE PROTEIN DNAJ 1"/>
    <property type="match status" value="1"/>
</dbReference>
<dbReference type="PANTHER" id="PTHR43096">
    <property type="entry name" value="DNAJ HOMOLOG 1, MITOCHONDRIAL-RELATED"/>
    <property type="match status" value="1"/>
</dbReference>
<dbReference type="Pfam" id="PF00226">
    <property type="entry name" value="DnaJ"/>
    <property type="match status" value="1"/>
</dbReference>
<dbReference type="Pfam" id="PF01556">
    <property type="entry name" value="DnaJ_C"/>
    <property type="match status" value="1"/>
</dbReference>
<dbReference type="Pfam" id="PF00684">
    <property type="entry name" value="DnaJ_CXXCXGXG"/>
    <property type="match status" value="1"/>
</dbReference>
<dbReference type="PRINTS" id="PR00625">
    <property type="entry name" value="JDOMAIN"/>
</dbReference>
<dbReference type="SMART" id="SM00271">
    <property type="entry name" value="DnaJ"/>
    <property type="match status" value="1"/>
</dbReference>
<dbReference type="SUPFAM" id="SSF46565">
    <property type="entry name" value="Chaperone J-domain"/>
    <property type="match status" value="1"/>
</dbReference>
<dbReference type="SUPFAM" id="SSF57938">
    <property type="entry name" value="DnaJ/Hsp40 cysteine-rich domain"/>
    <property type="match status" value="1"/>
</dbReference>
<dbReference type="SUPFAM" id="SSF49493">
    <property type="entry name" value="HSP40/DnaJ peptide-binding domain"/>
    <property type="match status" value="2"/>
</dbReference>
<dbReference type="PROSITE" id="PS00636">
    <property type="entry name" value="DNAJ_1"/>
    <property type="match status" value="1"/>
</dbReference>
<dbReference type="PROSITE" id="PS50076">
    <property type="entry name" value="DNAJ_2"/>
    <property type="match status" value="1"/>
</dbReference>
<dbReference type="PROSITE" id="PS51188">
    <property type="entry name" value="ZF_CR"/>
    <property type="match status" value="1"/>
</dbReference>
<reference key="1">
    <citation type="journal article" date="2003" name="Proc. Natl. Acad. Sci. U.S.A.">
        <title>The complete genome sequence of Mycobacterium bovis.</title>
        <authorList>
            <person name="Garnier T."/>
            <person name="Eiglmeier K."/>
            <person name="Camus J.-C."/>
            <person name="Medina N."/>
            <person name="Mansoor H."/>
            <person name="Pryor M."/>
            <person name="Duthoy S."/>
            <person name="Grondin S."/>
            <person name="Lacroix C."/>
            <person name="Monsempe C."/>
            <person name="Simon S."/>
            <person name="Harris B."/>
            <person name="Atkin R."/>
            <person name="Doggett J."/>
            <person name="Mayes R."/>
            <person name="Keating L."/>
            <person name="Wheeler P.R."/>
            <person name="Parkhill J."/>
            <person name="Barrell B.G."/>
            <person name="Cole S.T."/>
            <person name="Gordon S.V."/>
            <person name="Hewinson R.G."/>
        </authorList>
    </citation>
    <scope>NUCLEOTIDE SEQUENCE [LARGE SCALE GENOMIC DNA]</scope>
    <source>
        <strain>ATCC BAA-935 / AF2122/97</strain>
    </source>
</reference>
<reference key="2">
    <citation type="journal article" date="2017" name="Genome Announc.">
        <title>Updated reference genome sequence and annotation of Mycobacterium bovis AF2122/97.</title>
        <authorList>
            <person name="Malone K.M."/>
            <person name="Farrell D."/>
            <person name="Stuber T.P."/>
            <person name="Schubert O.T."/>
            <person name="Aebersold R."/>
            <person name="Robbe-Austerman S."/>
            <person name="Gordon S.V."/>
        </authorList>
    </citation>
    <scope>NUCLEOTIDE SEQUENCE [LARGE SCALE GENOMIC DNA]</scope>
    <scope>GENOME REANNOTATION</scope>
    <source>
        <strain>ATCC BAA-935 / AF2122/97</strain>
    </source>
</reference>
<proteinExistence type="inferred from homology"/>
<evidence type="ECO:0000255" key="1">
    <source>
        <dbReference type="HAMAP-Rule" id="MF_01152"/>
    </source>
</evidence>
<keyword id="KW-0143">Chaperone</keyword>
<keyword id="KW-0963">Cytoplasm</keyword>
<keyword id="KW-0235">DNA replication</keyword>
<keyword id="KW-0479">Metal-binding</keyword>
<keyword id="KW-1185">Reference proteome</keyword>
<keyword id="KW-0677">Repeat</keyword>
<keyword id="KW-0346">Stress response</keyword>
<keyword id="KW-0862">Zinc</keyword>
<keyword id="KW-0863">Zinc-finger</keyword>
<feature type="chain" id="PRO_0000070820" description="Chaperone protein DnaJ 1">
    <location>
        <begin position="1"/>
        <end position="395"/>
    </location>
</feature>
<feature type="domain" description="J" evidence="1">
    <location>
        <begin position="10"/>
        <end position="75"/>
    </location>
</feature>
<feature type="repeat" description="CXXCXGXG motif">
    <location>
        <begin position="177"/>
        <end position="184"/>
    </location>
</feature>
<feature type="repeat" description="CXXCXGXG motif">
    <location>
        <begin position="194"/>
        <end position="201"/>
    </location>
</feature>
<feature type="repeat" description="CXXCXGXG motif">
    <location>
        <begin position="216"/>
        <end position="223"/>
    </location>
</feature>
<feature type="repeat" description="CXXCXGXG motif">
    <location>
        <begin position="230"/>
        <end position="237"/>
    </location>
</feature>
<feature type="zinc finger region" description="CR-type" evidence="1">
    <location>
        <begin position="164"/>
        <end position="242"/>
    </location>
</feature>
<feature type="binding site" evidence="1">
    <location>
        <position position="177"/>
    </location>
    <ligand>
        <name>Zn(2+)</name>
        <dbReference type="ChEBI" id="CHEBI:29105"/>
        <label>1</label>
    </ligand>
</feature>
<feature type="binding site" evidence="1">
    <location>
        <position position="180"/>
    </location>
    <ligand>
        <name>Zn(2+)</name>
        <dbReference type="ChEBI" id="CHEBI:29105"/>
        <label>1</label>
    </ligand>
</feature>
<feature type="binding site" evidence="1">
    <location>
        <position position="194"/>
    </location>
    <ligand>
        <name>Zn(2+)</name>
        <dbReference type="ChEBI" id="CHEBI:29105"/>
        <label>2</label>
    </ligand>
</feature>
<feature type="binding site" evidence="1">
    <location>
        <position position="197"/>
    </location>
    <ligand>
        <name>Zn(2+)</name>
        <dbReference type="ChEBI" id="CHEBI:29105"/>
        <label>2</label>
    </ligand>
</feature>
<feature type="binding site" evidence="1">
    <location>
        <position position="216"/>
    </location>
    <ligand>
        <name>Zn(2+)</name>
        <dbReference type="ChEBI" id="CHEBI:29105"/>
        <label>2</label>
    </ligand>
</feature>
<feature type="binding site" evidence="1">
    <location>
        <position position="219"/>
    </location>
    <ligand>
        <name>Zn(2+)</name>
        <dbReference type="ChEBI" id="CHEBI:29105"/>
        <label>2</label>
    </ligand>
</feature>
<feature type="binding site" evidence="1">
    <location>
        <position position="230"/>
    </location>
    <ligand>
        <name>Zn(2+)</name>
        <dbReference type="ChEBI" id="CHEBI:29105"/>
        <label>1</label>
    </ligand>
</feature>
<feature type="binding site" evidence="1">
    <location>
        <position position="233"/>
    </location>
    <ligand>
        <name>Zn(2+)</name>
        <dbReference type="ChEBI" id="CHEBI:29105"/>
        <label>1</label>
    </ligand>
</feature>
<name>DNAJ1_MYCBO</name>
<protein>
    <recommendedName>
        <fullName evidence="1">Chaperone protein DnaJ 1</fullName>
    </recommendedName>
</protein>
<organism>
    <name type="scientific">Mycobacterium bovis (strain ATCC BAA-935 / AF2122/97)</name>
    <dbReference type="NCBI Taxonomy" id="233413"/>
    <lineage>
        <taxon>Bacteria</taxon>
        <taxon>Bacillati</taxon>
        <taxon>Actinomycetota</taxon>
        <taxon>Actinomycetes</taxon>
        <taxon>Mycobacteriales</taxon>
        <taxon>Mycobacteriaceae</taxon>
        <taxon>Mycobacterium</taxon>
        <taxon>Mycobacterium tuberculosis complex</taxon>
    </lineage>
</organism>
<sequence length="395" mass="41345">MAQREWVEKDFYQELGVSSDASPEEIKRAYRKLARDLHPDANPGNPAAGERFKAVSEAHNVLSDPAKRKEYDETRRLFAGGGFGGRRFDSGFGGGFGGFGVGGDGAEFNLNDLFDAASRTGGTTIGDLFGGLFGRGGSARPSRPRRGNDLETETELDFVEAAKGVAMPLRLTSPAPCTNCHGSGARPGTSPKVCPTCNGSGVINRNQGAFGFSEPCTDCRGSGSIIEHPCEECKGTGVTTRTRTINVRIPPGVEDGQRIRLAGQGEAGLRGAPSGDLYVTVHVRPDKIFGRDGDDLTVTVPVSFTELALGSTLSVPTLDGTVGVRVPKGTADGRILRVRGRGVPKRSGGSGDLLVTVKVAVPPNLAGAAQEALEAYAAAERSSGFNPRAGWAGNR</sequence>
<gene>
    <name evidence="1" type="primary">dnaJ1</name>
    <name type="ordered locus">BQ2027_MB0360</name>
</gene>
<comment type="function">
    <text evidence="1">Participates actively in the response to hyperosmotic and heat shock by preventing the aggregation of stress-denatured proteins and by disaggregating proteins, also in an autonomous, DnaK-independent fashion. Unfolded proteins bind initially to DnaJ; upon interaction with the DnaJ-bound protein, DnaK hydrolyzes its bound ATP, resulting in the formation of a stable complex. GrpE releases ADP from DnaK; ATP binding to DnaK triggers the release of the substrate protein, thus completing the reaction cycle. Several rounds of ATP-dependent interactions between DnaJ, DnaK and GrpE are required for fully efficient folding. Also involved, together with DnaK and GrpE, in the DNA replication of plasmids through activation of initiation proteins.</text>
</comment>
<comment type="cofactor">
    <cofactor evidence="1">
        <name>Zn(2+)</name>
        <dbReference type="ChEBI" id="CHEBI:29105"/>
    </cofactor>
    <text evidence="1">Binds 2 Zn(2+) ions per monomer.</text>
</comment>
<comment type="subunit">
    <text evidence="1">Homodimer.</text>
</comment>
<comment type="subcellular location">
    <subcellularLocation>
        <location evidence="1">Cytoplasm</location>
    </subcellularLocation>
</comment>
<comment type="domain">
    <text evidence="1">The J domain is necessary and sufficient to stimulate DnaK ATPase activity. Zinc center 1 plays an important role in the autonomous, DnaK-independent chaperone activity of DnaJ. Zinc center 2 is essential for interaction with DnaK and for DnaJ activity.</text>
</comment>
<comment type="similarity">
    <text evidence="1">Belongs to the DnaJ family.</text>
</comment>